<protein>
    <recommendedName>
        <fullName>Oxygen-evolving enhancer protein 2, chloroplastic</fullName>
        <shortName>OEE2</shortName>
    </recommendedName>
    <alternativeName>
        <fullName>23 kDa subunit of oxygen evolving system of photosystem II</fullName>
    </alternativeName>
    <alternativeName>
        <fullName>23 kDa thylakoid membrane protein</fullName>
    </alternativeName>
    <alternativeName>
        <fullName>OEC 23 kDa subunit</fullName>
    </alternativeName>
</protein>
<organism>
    <name type="scientific">Solanum lycopersicum</name>
    <name type="common">Tomato</name>
    <name type="synonym">Lycopersicon esculentum</name>
    <dbReference type="NCBI Taxonomy" id="4081"/>
    <lineage>
        <taxon>Eukaryota</taxon>
        <taxon>Viridiplantae</taxon>
        <taxon>Streptophyta</taxon>
        <taxon>Embryophyta</taxon>
        <taxon>Tracheophyta</taxon>
        <taxon>Spermatophyta</taxon>
        <taxon>Magnoliopsida</taxon>
        <taxon>eudicotyledons</taxon>
        <taxon>Gunneridae</taxon>
        <taxon>Pentapetalae</taxon>
        <taxon>asterids</taxon>
        <taxon>lamiids</taxon>
        <taxon>Solanales</taxon>
        <taxon>Solanaceae</taxon>
        <taxon>Solanoideae</taxon>
        <taxon>Solaneae</taxon>
        <taxon>Solanum</taxon>
        <taxon>Solanum subgen. Lycopersicon</taxon>
    </lineage>
</organism>
<evidence type="ECO:0000250" key="1"/>
<evidence type="ECO:0000305" key="2"/>
<reference key="1">
    <citation type="journal article" date="1992" name="Plant Mol. Biol.">
        <title>Nucleotide sequence of cDNA encoding the precursor of the 23 kDa photosystem II protein of tomato.</title>
        <authorList>
            <person name="Betts S.D."/>
            <person name="Pichersky E."/>
        </authorList>
    </citation>
    <scope>NUCLEOTIDE SEQUENCE [MRNA]</scope>
</reference>
<keyword id="KW-0150">Chloroplast</keyword>
<keyword id="KW-0472">Membrane</keyword>
<keyword id="KW-0602">Photosynthesis</keyword>
<keyword id="KW-0604">Photosystem II</keyword>
<keyword id="KW-0934">Plastid</keyword>
<keyword id="KW-1185">Reference proteome</keyword>
<keyword id="KW-0793">Thylakoid</keyword>
<keyword id="KW-0809">Transit peptide</keyword>
<name>PSBP_SOLLC</name>
<feature type="transit peptide" description="Chloroplast" evidence="1">
    <location>
        <begin position="1"/>
        <end position="73"/>
    </location>
</feature>
<feature type="chain" id="PRO_0000029577" description="Oxygen-evolving enhancer protein 2, chloroplastic">
    <location>
        <begin position="74"/>
        <end position="258"/>
    </location>
</feature>
<accession>P29795</accession>
<dbReference type="EMBL" id="X63007">
    <property type="protein sequence ID" value="CAA44736.1"/>
    <property type="molecule type" value="mRNA"/>
</dbReference>
<dbReference type="PIR" id="S20872">
    <property type="entry name" value="F2TOX2"/>
</dbReference>
<dbReference type="SMR" id="P29795"/>
<dbReference type="FunCoup" id="P29795">
    <property type="interactions" value="1217"/>
</dbReference>
<dbReference type="STRING" id="4081.P29795"/>
<dbReference type="PaxDb" id="4081-Solyc07g044860.2.1"/>
<dbReference type="ProMEX" id="P29795"/>
<dbReference type="eggNOG" id="ENOG502QUMW">
    <property type="taxonomic scope" value="Eukaryota"/>
</dbReference>
<dbReference type="InParanoid" id="P29795"/>
<dbReference type="Proteomes" id="UP000004994">
    <property type="component" value="Unplaced"/>
</dbReference>
<dbReference type="ExpressionAtlas" id="P29795">
    <property type="expression patterns" value="baseline and differential"/>
</dbReference>
<dbReference type="GO" id="GO:0009535">
    <property type="term" value="C:chloroplast thylakoid membrane"/>
    <property type="evidence" value="ECO:0007669"/>
    <property type="project" value="UniProtKB-SubCell"/>
</dbReference>
<dbReference type="GO" id="GO:0019898">
    <property type="term" value="C:extrinsic component of membrane"/>
    <property type="evidence" value="ECO:0007669"/>
    <property type="project" value="InterPro"/>
</dbReference>
<dbReference type="GO" id="GO:0009654">
    <property type="term" value="C:photosystem II oxygen evolving complex"/>
    <property type="evidence" value="ECO:0007669"/>
    <property type="project" value="InterPro"/>
</dbReference>
<dbReference type="GO" id="GO:0005509">
    <property type="term" value="F:calcium ion binding"/>
    <property type="evidence" value="ECO:0007669"/>
    <property type="project" value="InterPro"/>
</dbReference>
<dbReference type="GO" id="GO:0015979">
    <property type="term" value="P:photosynthesis"/>
    <property type="evidence" value="ECO:0007669"/>
    <property type="project" value="UniProtKB-KW"/>
</dbReference>
<dbReference type="Gene3D" id="3.40.1000.10">
    <property type="entry name" value="Mog1/PsbP, alpha/beta/alpha sandwich"/>
    <property type="match status" value="1"/>
</dbReference>
<dbReference type="InterPro" id="IPR016123">
    <property type="entry name" value="Mog1/PsbP_a/b/a-sand"/>
</dbReference>
<dbReference type="InterPro" id="IPR002683">
    <property type="entry name" value="PsbP_C"/>
</dbReference>
<dbReference type="PANTHER" id="PTHR31407">
    <property type="match status" value="1"/>
</dbReference>
<dbReference type="PANTHER" id="PTHR31407:SF6">
    <property type="entry name" value="OXYGEN-EVOLVING ENHANCER PROTEIN 2-1, CHLOROPLASTIC"/>
    <property type="match status" value="1"/>
</dbReference>
<dbReference type="Pfam" id="PF01789">
    <property type="entry name" value="PsbP"/>
    <property type="match status" value="1"/>
</dbReference>
<dbReference type="SUPFAM" id="SSF55724">
    <property type="entry name" value="Mog1p/PsbP-like"/>
    <property type="match status" value="1"/>
</dbReference>
<comment type="function">
    <text>May be involved in the regulation of photosystem II.</text>
</comment>
<comment type="subcellular location">
    <subcellularLocation>
        <location>Plastid</location>
        <location>Chloroplast thylakoid membrane</location>
    </subcellularLocation>
    <text>Associated with the photosystem II complex.</text>
</comment>
<comment type="induction">
    <text>By light.</text>
</comment>
<comment type="similarity">
    <text evidence="2">Belongs to the PsbP family.</text>
</comment>
<proteinExistence type="evidence at transcript level"/>
<gene>
    <name type="primary">PSBP</name>
    <name type="synonym">PSBX</name>
</gene>
<sequence length="258" mass="27792">MAASTQCFLHQYHALRSSPARTSSVSSPKPNQLICRAQKQDDASNAAVSRRLALTLLIGTAAIGSKVSPADAAYGEAANVFGKPKENTDFLPYNGDGFKLQVPAKWNPSKEVEYPGQVLRYEDNFDSTSNLIVAVTPTDKKSITDYGSPEEFLSKVDYLLGKQAYFGKTDSEGGFESGAVATRNLLEASSATVGGKEYYYLSVLTRTADGDEGGKHQLITATVNDGKLYICKAQAGDKRWFKGAKKFVENAATSFSIA</sequence>